<protein>
    <recommendedName>
        <fullName evidence="8">Fructan 1-exohydrolase w2</fullName>
        <ecNumber>3.2.1.153</ecNumber>
    </recommendedName>
</protein>
<dbReference type="EC" id="3.2.1.153"/>
<dbReference type="EMBL" id="AJ508387">
    <property type="protein sequence ID" value="CAD48199.1"/>
    <property type="molecule type" value="mRNA"/>
</dbReference>
<dbReference type="EMBL" id="FJ184991">
    <property type="protein sequence ID" value="ACI16117.1"/>
    <property type="molecule type" value="Genomic_DNA"/>
</dbReference>
<dbReference type="SMR" id="Q84LA1"/>
<dbReference type="STRING" id="4565.Q84LA1"/>
<dbReference type="CAZy" id="GH32">
    <property type="family name" value="Glycoside Hydrolase Family 32"/>
</dbReference>
<dbReference type="GlyCosmos" id="Q84LA1">
    <property type="glycosylation" value="4 sites, No reported glycans"/>
</dbReference>
<dbReference type="EnsemblPlants" id="TraesCS6D02G064400.1">
    <property type="protein sequence ID" value="TraesCS6D02G064400.1"/>
    <property type="gene ID" value="TraesCS6D02G064400"/>
</dbReference>
<dbReference type="EnsemblPlants" id="TraesCS6D03G0127800.1">
    <property type="protein sequence ID" value="TraesCS6D03G0127800.1.CDS"/>
    <property type="gene ID" value="TraesCS6D03G0127800"/>
</dbReference>
<dbReference type="EnsemblPlants" id="TraesJAGUn03G04491160.1">
    <property type="protein sequence ID" value="TraesJAGUn03G04491160.1"/>
    <property type="gene ID" value="TraesJAGUn03G04491160"/>
</dbReference>
<dbReference type="EnsemblPlants" id="TraesJUL6D03G03693530.1">
    <property type="protein sequence ID" value="TraesJUL6D03G03693530.1"/>
    <property type="gene ID" value="TraesJUL6D03G03693530"/>
</dbReference>
<dbReference type="EnsemblPlants" id="TraesLACUn03G04446940.1">
    <property type="protein sequence ID" value="TraesLACUn03G04446940.1"/>
    <property type="gene ID" value="TraesLACUn03G04446940"/>
</dbReference>
<dbReference type="EnsemblPlants" id="TraesLDMUn03G04513450.1">
    <property type="protein sequence ID" value="TraesLDMUn03G04513450.1"/>
    <property type="gene ID" value="TraesLDMUn03G04513450"/>
</dbReference>
<dbReference type="EnsemblPlants" id="TraesMAC6D03G03659530.1">
    <property type="protein sequence ID" value="TraesMAC6D03G03659530.1"/>
    <property type="gene ID" value="TraesMAC6D03G03659530"/>
</dbReference>
<dbReference type="EnsemblPlants" id="TraesPARA_EIv1.0_2209880.1">
    <property type="protein sequence ID" value="TraesPARA_EIv1.0_2209880.1.CDS"/>
    <property type="gene ID" value="TraesPARA_EIv1.0_2209880"/>
</dbReference>
<dbReference type="EnsemblPlants" id="TraesSTA6D03G03654610.1">
    <property type="protein sequence ID" value="TraesSTA6D03G03654610.1"/>
    <property type="gene ID" value="TraesSTA6D03G03654610"/>
</dbReference>
<dbReference type="Gramene" id="TraesCS6D02G064400.1">
    <property type="protein sequence ID" value="TraesCS6D02G064400.1"/>
    <property type="gene ID" value="TraesCS6D02G064400"/>
</dbReference>
<dbReference type="Gramene" id="TraesCS6D03G0127800.1">
    <property type="protein sequence ID" value="TraesCS6D03G0127800.1.CDS"/>
    <property type="gene ID" value="TraesCS6D03G0127800"/>
</dbReference>
<dbReference type="Gramene" id="TraesJAGUn03G04491160.1">
    <property type="protein sequence ID" value="TraesJAGUn03G04491160.1"/>
    <property type="gene ID" value="TraesJAGUn03G04491160"/>
</dbReference>
<dbReference type="Gramene" id="TraesJUL6D03G03693530.1">
    <property type="protein sequence ID" value="TraesJUL6D03G03693530.1"/>
    <property type="gene ID" value="TraesJUL6D03G03693530"/>
</dbReference>
<dbReference type="Gramene" id="TraesLACUn03G04446940.1">
    <property type="protein sequence ID" value="TraesLACUn03G04446940.1"/>
    <property type="gene ID" value="TraesLACUn03G04446940"/>
</dbReference>
<dbReference type="Gramene" id="TraesLDMUn03G04513450.1">
    <property type="protein sequence ID" value="TraesLDMUn03G04513450.1"/>
    <property type="gene ID" value="TraesLDMUn03G04513450"/>
</dbReference>
<dbReference type="Gramene" id="TraesMAC6D03G03659530.1">
    <property type="protein sequence ID" value="TraesMAC6D03G03659530.1"/>
    <property type="gene ID" value="TraesMAC6D03G03659530"/>
</dbReference>
<dbReference type="Gramene" id="TraesPARA_EIv1.0_2209880.1">
    <property type="protein sequence ID" value="TraesPARA_EIv1.0_2209880.1.CDS"/>
    <property type="gene ID" value="TraesPARA_EIv1.0_2209880"/>
</dbReference>
<dbReference type="Gramene" id="TraesSTA6D03G03654610.1">
    <property type="protein sequence ID" value="TraesSTA6D03G03654610.1"/>
    <property type="gene ID" value="TraesSTA6D03G03654610"/>
</dbReference>
<dbReference type="KEGG" id="ag:CAD48199"/>
<dbReference type="OMA" id="EKWEANW"/>
<dbReference type="OrthoDB" id="202537at2759"/>
<dbReference type="Proteomes" id="UP000019116">
    <property type="component" value="Chromosome 6D"/>
</dbReference>
<dbReference type="ExpressionAtlas" id="Q84LA1">
    <property type="expression patterns" value="baseline and differential"/>
</dbReference>
<dbReference type="GO" id="GO:0033948">
    <property type="term" value="F:fructan beta-(2,1)-fructosidase activity"/>
    <property type="evidence" value="ECO:0007669"/>
    <property type="project" value="UniProtKB-EC"/>
</dbReference>
<dbReference type="GO" id="GO:0005975">
    <property type="term" value="P:carbohydrate metabolic process"/>
    <property type="evidence" value="ECO:0007669"/>
    <property type="project" value="InterPro"/>
</dbReference>
<dbReference type="CDD" id="cd18624">
    <property type="entry name" value="GH32_Fruct1-like"/>
    <property type="match status" value="1"/>
</dbReference>
<dbReference type="FunFam" id="2.115.10.20:FF:000001">
    <property type="entry name" value="Beta-fructofuranosidase, insoluble isoenzyme CWINV1"/>
    <property type="match status" value="1"/>
</dbReference>
<dbReference type="FunFam" id="2.60.120.560:FF:000002">
    <property type="entry name" value="Beta-fructofuranosidase, insoluble isoenzyme CWINV1"/>
    <property type="match status" value="1"/>
</dbReference>
<dbReference type="Gene3D" id="2.60.120.560">
    <property type="entry name" value="Exo-inulinase, domain 1"/>
    <property type="match status" value="1"/>
</dbReference>
<dbReference type="Gene3D" id="2.115.10.20">
    <property type="entry name" value="Glycosyl hydrolase domain, family 43"/>
    <property type="match status" value="1"/>
</dbReference>
<dbReference type="InterPro" id="IPR013320">
    <property type="entry name" value="ConA-like_dom_sf"/>
</dbReference>
<dbReference type="InterPro" id="IPR050551">
    <property type="entry name" value="Fructan_Metab_Enzymes"/>
</dbReference>
<dbReference type="InterPro" id="IPR001362">
    <property type="entry name" value="Glyco_hydro_32"/>
</dbReference>
<dbReference type="InterPro" id="IPR013189">
    <property type="entry name" value="Glyco_hydro_32_C"/>
</dbReference>
<dbReference type="InterPro" id="IPR013148">
    <property type="entry name" value="Glyco_hydro_32_N"/>
</dbReference>
<dbReference type="InterPro" id="IPR023296">
    <property type="entry name" value="Glyco_hydro_beta-prop_sf"/>
</dbReference>
<dbReference type="PANTHER" id="PTHR31953">
    <property type="entry name" value="BETA-FRUCTOFURANOSIDASE, INSOLUBLE ISOENZYME CWINV1-RELATED"/>
    <property type="match status" value="1"/>
</dbReference>
<dbReference type="Pfam" id="PF08244">
    <property type="entry name" value="Glyco_hydro_32C"/>
    <property type="match status" value="1"/>
</dbReference>
<dbReference type="Pfam" id="PF00251">
    <property type="entry name" value="Glyco_hydro_32N"/>
    <property type="match status" value="1"/>
</dbReference>
<dbReference type="SMART" id="SM00640">
    <property type="entry name" value="Glyco_32"/>
    <property type="match status" value="1"/>
</dbReference>
<dbReference type="SUPFAM" id="SSF75005">
    <property type="entry name" value="Arabinanase/levansucrase/invertase"/>
    <property type="match status" value="1"/>
</dbReference>
<dbReference type="SUPFAM" id="SSF49899">
    <property type="entry name" value="Concanavalin A-like lectins/glucanases"/>
    <property type="match status" value="1"/>
</dbReference>
<reference evidence="7 9" key="1">
    <citation type="journal article" date="2003" name="Plant Physiol.">
        <title>Fructan 1-exohydrolases. beta-(2,1)-trimmers during graminan biosynthesis in stems of wheat? Purification, characterization, mass mapping, and cloning of two fructan 1-exohydrolase isoforms.</title>
        <authorList>
            <person name="Van Den Ende W."/>
            <person name="Clerens S."/>
            <person name="Vergauwen R."/>
            <person name="Van Riet L."/>
            <person name="Van Laere A."/>
            <person name="Yoshida M."/>
            <person name="Kawakami A."/>
        </authorList>
    </citation>
    <scope>NUCLEOTIDE SEQUENCE [MRNA]</scope>
    <scope>FUNCTION</scope>
    <scope>CATALYTIC ACTIVITY</scope>
    <scope>ACTIVITY REGULATION</scope>
    <scope>BIOPHYSICOCHEMICAL PROPERTIES</scope>
    <source>
        <strain evidence="3">cv. Pajero</strain>
        <tissue evidence="3">Stem</tissue>
    </source>
</reference>
<reference evidence="8" key="2">
    <citation type="journal article" date="2008" name="Mol. Breed.">
        <title>The genome structure of the 1-FEH genes in wheat (Triticum aestivum L.): new markers to track stem carbohydrates and grain filling QTLs in breeding.</title>
        <authorList>
            <person name="Zhang J."/>
            <person name="Huang S."/>
            <person name="Fosu-Nyarko J."/>
            <person name="Dell B."/>
            <person name="McNeil M."/>
            <person name="Waters I."/>
            <person name="Moolhuijzen P."/>
            <person name="Conocono E."/>
            <person name="Appels R."/>
        </authorList>
        <dbReference type="AGRICOLA" id="IND44093987"/>
    </citation>
    <scope>NUCLEOTIDE SEQUENCE [GENOMIC DNA]</scope>
    <source>
        <strain evidence="4">cv. Chinese Spring</strain>
    </source>
</reference>
<proteinExistence type="evidence at protein level"/>
<feature type="signal peptide" evidence="2">
    <location>
        <begin position="1"/>
        <end position="20"/>
    </location>
</feature>
<feature type="chain" id="PRO_5000068836" description="Fructan 1-exohydrolase w2" evidence="2">
    <location>
        <begin position="21"/>
        <end position="596"/>
    </location>
</feature>
<feature type="active site" evidence="1">
    <location>
        <position position="75"/>
    </location>
</feature>
<feature type="glycosylation site" description="N-linked (GlcNAc...) asparagine" evidence="2">
    <location>
        <position position="168"/>
    </location>
</feature>
<feature type="glycosylation site" description="N-linked (GlcNAc...) asparagine" evidence="2">
    <location>
        <position position="236"/>
    </location>
</feature>
<feature type="glycosylation site" description="N-linked (GlcNAc...) asparagine" evidence="2">
    <location>
        <position position="248"/>
    </location>
</feature>
<feature type="glycosylation site" description="N-linked (GlcNAc...) asparagine" evidence="2">
    <location>
        <position position="567"/>
    </location>
</feature>
<feature type="disulfide bond" evidence="1">
    <location>
        <begin position="446"/>
        <end position="492"/>
    </location>
</feature>
<sequence length="596" mass="66603">MAQAWAFLLPVLVLGSYVTSLFFPSYISNPLCGGDGGRSLFLCAQAPKDQDPSPAVSTMYKTAFHFQPAKNWMNDPSGPMYFNGIYHEFYQYNLNGPIFGDIVWGHSVSTDLVNWIGLEPALVRDTPSDIDGCWTGSVTILPGGKPIIIYTGGDIDQHQAQNIAFPKNRSDPYLREWIKAPNNPVLRPDEPGMNSIEFRDPTTGWIGPDGLWRMAVGGELNGYSAALLYKSEDFLNWTKVDHPLYSHNGSNMWECPDFFAVLPGNNAGLDLSAAIPQGAKHALKMSVDSVDKYMIGVYDLQRDAFVPDNVVDDRRLWLRIDYGTFYASKSFFDSNKNRRIIWGWSRETDSPSDDLEKGWAGLHTIPRTIWLAGDGKQLLQWPVEEIESLRTNEISHQGIELNKGDLFEIKEVDAFQADVEIDFELASIDDADPFDPSWLLDPEKHCGEAGASVPGGIGPFGLVILASDNMDEHTEVYFRVYKSQEKYMVLMCSDLRRSSLRPDLEKPAYGGFFEFDLEKERKISLRTLIDRSAVESFGGGGRVCITSRVYPAVLADVGRAHIYAFNNGSATVRVPQLSAWTMRKAQVNVEKGWSAI</sequence>
<comment type="function">
    <text evidence="3">Hydrolyzes inulin-type beta-(2,1)-fructans, but not beta-(2,1)-linkages in branched fructans. Has low activity against beta-(2,6)-linked fructans. May play a role as a beta-(2,1)-trimmer during graminan biosynthesis.</text>
</comment>
<comment type="catalytic activity">
    <reaction evidence="3">
        <text>Hydrolysis of terminal, non-reducing (2-&gt;1)-linked beta-D-fructofuranose residues in fructans.</text>
        <dbReference type="EC" id="3.2.1.153"/>
    </reaction>
</comment>
<comment type="activity regulation">
    <text evidence="3">Inhibited by sucrose.</text>
</comment>
<comment type="biophysicochemical properties">
    <kinetics>
        <KM evidence="3">7 mM for 1-kestose</KM>
    </kinetics>
    <phDependence>
        <text evidence="3">Optimum pH is 4.5-5.5. Inactive above pH 7.5.</text>
    </phDependence>
    <temperatureDependence>
        <text evidence="3">Optimum temperature is 30-40 degrees Celsius.</text>
    </temperatureDependence>
</comment>
<comment type="similarity">
    <text evidence="2">Belongs to the glycosyl hydrolase 32 family.</text>
</comment>
<keyword id="KW-1015">Disulfide bond</keyword>
<keyword id="KW-0325">Glycoprotein</keyword>
<keyword id="KW-0326">Glycosidase</keyword>
<keyword id="KW-0378">Hydrolase</keyword>
<keyword id="KW-1185">Reference proteome</keyword>
<keyword id="KW-0732">Signal</keyword>
<name>1FEH2_WHEAT</name>
<evidence type="ECO:0000250" key="1">
    <source>
        <dbReference type="UniProtKB" id="Q43866"/>
    </source>
</evidence>
<evidence type="ECO:0000255" key="2"/>
<evidence type="ECO:0000269" key="3">
    <source>
    </source>
</evidence>
<evidence type="ECO:0000269" key="4">
    <source ref="2"/>
</evidence>
<evidence type="ECO:0000303" key="5">
    <source>
    </source>
</evidence>
<evidence type="ECO:0000303" key="6">
    <source ref="2"/>
</evidence>
<evidence type="ECO:0000305" key="7"/>
<evidence type="ECO:0000312" key="8">
    <source>
        <dbReference type="EMBL" id="ACI16117.1"/>
    </source>
</evidence>
<evidence type="ECO:0000312" key="9">
    <source>
        <dbReference type="EMBL" id="CAD48199.1"/>
    </source>
</evidence>
<gene>
    <name evidence="5 6" type="primary">1-FEHw2</name>
</gene>
<accession>Q84LA1</accession>
<organism>
    <name type="scientific">Triticum aestivum</name>
    <name type="common">Wheat</name>
    <dbReference type="NCBI Taxonomy" id="4565"/>
    <lineage>
        <taxon>Eukaryota</taxon>
        <taxon>Viridiplantae</taxon>
        <taxon>Streptophyta</taxon>
        <taxon>Embryophyta</taxon>
        <taxon>Tracheophyta</taxon>
        <taxon>Spermatophyta</taxon>
        <taxon>Magnoliopsida</taxon>
        <taxon>Liliopsida</taxon>
        <taxon>Poales</taxon>
        <taxon>Poaceae</taxon>
        <taxon>BOP clade</taxon>
        <taxon>Pooideae</taxon>
        <taxon>Triticodae</taxon>
        <taxon>Triticeae</taxon>
        <taxon>Triticinae</taxon>
        <taxon>Triticum</taxon>
    </lineage>
</organism>